<reference key="1">
    <citation type="journal article" date="2009" name="J. Bacteriol.">
        <title>Genomic sequencing reveals regulatory mutations and recombinational events in the widely used MC4100 lineage of Escherichia coli K-12.</title>
        <authorList>
            <person name="Ferenci T."/>
            <person name="Zhou Z."/>
            <person name="Betteridge T."/>
            <person name="Ren Y."/>
            <person name="Liu Y."/>
            <person name="Feng L."/>
            <person name="Reeves P.R."/>
            <person name="Wang L."/>
        </authorList>
    </citation>
    <scope>NUCLEOTIDE SEQUENCE [LARGE SCALE GENOMIC DNA]</scope>
    <source>
        <strain>K12 / MC4100 / BW2952</strain>
    </source>
</reference>
<name>SYD_ECOBW</name>
<proteinExistence type="inferred from homology"/>
<protein>
    <recommendedName>
        <fullName evidence="1">Aspartate--tRNA ligase</fullName>
        <ecNumber evidence="1">6.1.1.12</ecNumber>
    </recommendedName>
    <alternativeName>
        <fullName evidence="1">Aspartyl-tRNA synthetase</fullName>
        <shortName evidence="1">AspRS</shortName>
    </alternativeName>
</protein>
<evidence type="ECO:0000255" key="1">
    <source>
        <dbReference type="HAMAP-Rule" id="MF_00044"/>
    </source>
</evidence>
<organism>
    <name type="scientific">Escherichia coli (strain K12 / MC4100 / BW2952)</name>
    <dbReference type="NCBI Taxonomy" id="595496"/>
    <lineage>
        <taxon>Bacteria</taxon>
        <taxon>Pseudomonadati</taxon>
        <taxon>Pseudomonadota</taxon>
        <taxon>Gammaproteobacteria</taxon>
        <taxon>Enterobacterales</taxon>
        <taxon>Enterobacteriaceae</taxon>
        <taxon>Escherichia</taxon>
    </lineage>
</organism>
<keyword id="KW-0030">Aminoacyl-tRNA synthetase</keyword>
<keyword id="KW-0067">ATP-binding</keyword>
<keyword id="KW-0963">Cytoplasm</keyword>
<keyword id="KW-0436">Ligase</keyword>
<keyword id="KW-0547">Nucleotide-binding</keyword>
<keyword id="KW-0648">Protein biosynthesis</keyword>
<sequence>MRTEYCGQLRLSHVGQQVTLCGWVNRRRDLGSLIFIDMRDREGIVQVFFDPDRADALKLASELRNEFCIQVTGTVRARDEKNINRDMATGEIEVLASSLTIINRADVLPLDSNHVNTEEARLKYRYLDLRRPEMAQRLKTRAKITSLVRRFMDDHGFLDIETPMLTKATPEGARDYLVPSRVHKGKFYALPQSPQLFKQLLMMSGFDRYYQIVKCFRDEDLRADRQPEFTQIDVETSFMTAPQVREVMEALVRHLWLEVKGVDLGDFPVMTFAEAERRYGSDKPDLRNPMELTDVADLLKSVEFAVFAGPANDPKGRVAALRVPGGASLTRKQIDEYGNFVKIYGAKGLAYIKVNERAKGLEGINSPVAKFLNAEIIEDILDRTAAQDGDMIFFGADNKKIVADAMGALRLKVGKDLGLTDESKWAPLWVIDFPMFEDDGEGGLTAMHHPFTSPKDMTAAELKAAPENAVANAYDMVINGYEVGGGSVRIHNGDMQQTVFGILGINEEEQREKFGFLLDALKYGTPPHAGLAFGLDRLTMLLTGTDNIRDVIAFPKTTAAACLMTEAPSFANPTALAELSIQVVKKAENN</sequence>
<gene>
    <name evidence="1" type="primary">aspS</name>
    <name type="ordered locus">BWG_1680</name>
</gene>
<feature type="chain" id="PRO_1000202155" description="Aspartate--tRNA ligase">
    <location>
        <begin position="1"/>
        <end position="590"/>
    </location>
</feature>
<feature type="region of interest" description="Aspartate" evidence="1">
    <location>
        <begin position="195"/>
        <end position="198"/>
    </location>
</feature>
<feature type="binding site" evidence="1">
    <location>
        <position position="171"/>
    </location>
    <ligand>
        <name>L-aspartate</name>
        <dbReference type="ChEBI" id="CHEBI:29991"/>
    </ligand>
</feature>
<feature type="binding site" evidence="1">
    <location>
        <begin position="217"/>
        <end position="219"/>
    </location>
    <ligand>
        <name>ATP</name>
        <dbReference type="ChEBI" id="CHEBI:30616"/>
    </ligand>
</feature>
<feature type="binding site" evidence="1">
    <location>
        <position position="217"/>
    </location>
    <ligand>
        <name>L-aspartate</name>
        <dbReference type="ChEBI" id="CHEBI:29991"/>
    </ligand>
</feature>
<feature type="binding site" evidence="1">
    <location>
        <position position="226"/>
    </location>
    <ligand>
        <name>ATP</name>
        <dbReference type="ChEBI" id="CHEBI:30616"/>
    </ligand>
</feature>
<feature type="binding site" evidence="1">
    <location>
        <position position="448"/>
    </location>
    <ligand>
        <name>L-aspartate</name>
        <dbReference type="ChEBI" id="CHEBI:29991"/>
    </ligand>
</feature>
<feature type="binding site" evidence="1">
    <location>
        <position position="482"/>
    </location>
    <ligand>
        <name>ATP</name>
        <dbReference type="ChEBI" id="CHEBI:30616"/>
    </ligand>
</feature>
<feature type="binding site" evidence="1">
    <location>
        <position position="489"/>
    </location>
    <ligand>
        <name>L-aspartate</name>
        <dbReference type="ChEBI" id="CHEBI:29991"/>
    </ligand>
</feature>
<feature type="binding site" evidence="1">
    <location>
        <begin position="534"/>
        <end position="537"/>
    </location>
    <ligand>
        <name>ATP</name>
        <dbReference type="ChEBI" id="CHEBI:30616"/>
    </ligand>
</feature>
<comment type="function">
    <text evidence="1">Catalyzes the attachment of L-aspartate to tRNA(Asp) in a two-step reaction: L-aspartate is first activated by ATP to form Asp-AMP and then transferred to the acceptor end of tRNA(Asp).</text>
</comment>
<comment type="catalytic activity">
    <reaction evidence="1">
        <text>tRNA(Asp) + L-aspartate + ATP = L-aspartyl-tRNA(Asp) + AMP + diphosphate</text>
        <dbReference type="Rhea" id="RHEA:19649"/>
        <dbReference type="Rhea" id="RHEA-COMP:9660"/>
        <dbReference type="Rhea" id="RHEA-COMP:9678"/>
        <dbReference type="ChEBI" id="CHEBI:29991"/>
        <dbReference type="ChEBI" id="CHEBI:30616"/>
        <dbReference type="ChEBI" id="CHEBI:33019"/>
        <dbReference type="ChEBI" id="CHEBI:78442"/>
        <dbReference type="ChEBI" id="CHEBI:78516"/>
        <dbReference type="ChEBI" id="CHEBI:456215"/>
        <dbReference type="EC" id="6.1.1.12"/>
    </reaction>
</comment>
<comment type="subunit">
    <text evidence="1">Homodimer.</text>
</comment>
<comment type="subcellular location">
    <subcellularLocation>
        <location evidence="1">Cytoplasm</location>
    </subcellularLocation>
</comment>
<comment type="similarity">
    <text evidence="1">Belongs to the class-II aminoacyl-tRNA synthetase family. Type 1 subfamily.</text>
</comment>
<dbReference type="EC" id="6.1.1.12" evidence="1"/>
<dbReference type="EMBL" id="CP001396">
    <property type="protein sequence ID" value="ACR62026.1"/>
    <property type="molecule type" value="Genomic_DNA"/>
</dbReference>
<dbReference type="RefSeq" id="WP_001258678.1">
    <property type="nucleotide sequence ID" value="NC_012759.1"/>
</dbReference>
<dbReference type="SMR" id="C4ZQF0"/>
<dbReference type="KEGG" id="ebw:BWG_1680"/>
<dbReference type="HOGENOM" id="CLU_014330_3_2_6"/>
<dbReference type="GO" id="GO:0005737">
    <property type="term" value="C:cytoplasm"/>
    <property type="evidence" value="ECO:0007669"/>
    <property type="project" value="UniProtKB-SubCell"/>
</dbReference>
<dbReference type="GO" id="GO:0004815">
    <property type="term" value="F:aspartate-tRNA ligase activity"/>
    <property type="evidence" value="ECO:0007669"/>
    <property type="project" value="UniProtKB-UniRule"/>
</dbReference>
<dbReference type="GO" id="GO:0005524">
    <property type="term" value="F:ATP binding"/>
    <property type="evidence" value="ECO:0007669"/>
    <property type="project" value="UniProtKB-UniRule"/>
</dbReference>
<dbReference type="GO" id="GO:0003676">
    <property type="term" value="F:nucleic acid binding"/>
    <property type="evidence" value="ECO:0007669"/>
    <property type="project" value="InterPro"/>
</dbReference>
<dbReference type="GO" id="GO:0006422">
    <property type="term" value="P:aspartyl-tRNA aminoacylation"/>
    <property type="evidence" value="ECO:0007669"/>
    <property type="project" value="UniProtKB-UniRule"/>
</dbReference>
<dbReference type="CDD" id="cd00777">
    <property type="entry name" value="AspRS_core"/>
    <property type="match status" value="1"/>
</dbReference>
<dbReference type="CDD" id="cd04317">
    <property type="entry name" value="EcAspRS_like_N"/>
    <property type="match status" value="1"/>
</dbReference>
<dbReference type="FunFam" id="2.40.50.140:FF:000080">
    <property type="entry name" value="Aspartate--tRNA ligase"/>
    <property type="match status" value="1"/>
</dbReference>
<dbReference type="FunFam" id="3.30.1360.30:FF:000001">
    <property type="entry name" value="Aspartate--tRNA ligase"/>
    <property type="match status" value="1"/>
</dbReference>
<dbReference type="Gene3D" id="3.30.930.10">
    <property type="entry name" value="Bira Bifunctional Protein, Domain 2"/>
    <property type="match status" value="1"/>
</dbReference>
<dbReference type="Gene3D" id="3.30.1360.30">
    <property type="entry name" value="GAD-like domain"/>
    <property type="match status" value="1"/>
</dbReference>
<dbReference type="Gene3D" id="2.40.50.140">
    <property type="entry name" value="Nucleic acid-binding proteins"/>
    <property type="match status" value="1"/>
</dbReference>
<dbReference type="HAMAP" id="MF_00044">
    <property type="entry name" value="Asp_tRNA_synth_type1"/>
    <property type="match status" value="1"/>
</dbReference>
<dbReference type="InterPro" id="IPR004364">
    <property type="entry name" value="Aa-tRNA-synt_II"/>
</dbReference>
<dbReference type="InterPro" id="IPR006195">
    <property type="entry name" value="aa-tRNA-synth_II"/>
</dbReference>
<dbReference type="InterPro" id="IPR045864">
    <property type="entry name" value="aa-tRNA-synth_II/BPL/LPL"/>
</dbReference>
<dbReference type="InterPro" id="IPR004524">
    <property type="entry name" value="Asp-tRNA-ligase_1"/>
</dbReference>
<dbReference type="InterPro" id="IPR047089">
    <property type="entry name" value="Asp-tRNA-ligase_1_N"/>
</dbReference>
<dbReference type="InterPro" id="IPR002312">
    <property type="entry name" value="Asp/Asn-tRNA-synth_IIb"/>
</dbReference>
<dbReference type="InterPro" id="IPR047090">
    <property type="entry name" value="AspRS_core"/>
</dbReference>
<dbReference type="InterPro" id="IPR004115">
    <property type="entry name" value="GAD-like_sf"/>
</dbReference>
<dbReference type="InterPro" id="IPR029351">
    <property type="entry name" value="GAD_dom"/>
</dbReference>
<dbReference type="InterPro" id="IPR012340">
    <property type="entry name" value="NA-bd_OB-fold"/>
</dbReference>
<dbReference type="InterPro" id="IPR004365">
    <property type="entry name" value="NA-bd_OB_tRNA"/>
</dbReference>
<dbReference type="NCBIfam" id="TIGR00459">
    <property type="entry name" value="aspS_bact"/>
    <property type="match status" value="1"/>
</dbReference>
<dbReference type="NCBIfam" id="NF001750">
    <property type="entry name" value="PRK00476.1"/>
    <property type="match status" value="1"/>
</dbReference>
<dbReference type="PANTHER" id="PTHR22594:SF5">
    <property type="entry name" value="ASPARTATE--TRNA LIGASE, MITOCHONDRIAL"/>
    <property type="match status" value="1"/>
</dbReference>
<dbReference type="PANTHER" id="PTHR22594">
    <property type="entry name" value="ASPARTYL/LYSYL-TRNA SYNTHETASE"/>
    <property type="match status" value="1"/>
</dbReference>
<dbReference type="Pfam" id="PF02938">
    <property type="entry name" value="GAD"/>
    <property type="match status" value="1"/>
</dbReference>
<dbReference type="Pfam" id="PF00152">
    <property type="entry name" value="tRNA-synt_2"/>
    <property type="match status" value="1"/>
</dbReference>
<dbReference type="Pfam" id="PF01336">
    <property type="entry name" value="tRNA_anti-codon"/>
    <property type="match status" value="1"/>
</dbReference>
<dbReference type="PRINTS" id="PR01042">
    <property type="entry name" value="TRNASYNTHASP"/>
</dbReference>
<dbReference type="SUPFAM" id="SSF55681">
    <property type="entry name" value="Class II aaRS and biotin synthetases"/>
    <property type="match status" value="1"/>
</dbReference>
<dbReference type="SUPFAM" id="SSF55261">
    <property type="entry name" value="GAD domain-like"/>
    <property type="match status" value="1"/>
</dbReference>
<dbReference type="SUPFAM" id="SSF50249">
    <property type="entry name" value="Nucleic acid-binding proteins"/>
    <property type="match status" value="1"/>
</dbReference>
<dbReference type="PROSITE" id="PS50862">
    <property type="entry name" value="AA_TRNA_LIGASE_II"/>
    <property type="match status" value="1"/>
</dbReference>
<accession>C4ZQF0</accession>